<dbReference type="EMBL" id="CP000384">
    <property type="protein sequence ID" value="ABG07144.1"/>
    <property type="molecule type" value="Genomic_DNA"/>
</dbReference>
<dbReference type="SMR" id="Q1BD90"/>
<dbReference type="KEGG" id="mmc:Mmcs_1030"/>
<dbReference type="HOGENOM" id="CLU_065464_1_2_11"/>
<dbReference type="BioCyc" id="MSP164756:G1G6O-1054-MONOMER"/>
<dbReference type="GO" id="GO:0022625">
    <property type="term" value="C:cytosolic large ribosomal subunit"/>
    <property type="evidence" value="ECO:0007669"/>
    <property type="project" value="TreeGrafter"/>
</dbReference>
<dbReference type="GO" id="GO:0019843">
    <property type="term" value="F:rRNA binding"/>
    <property type="evidence" value="ECO:0007669"/>
    <property type="project" value="UniProtKB-UniRule"/>
</dbReference>
<dbReference type="GO" id="GO:0003735">
    <property type="term" value="F:structural constituent of ribosome"/>
    <property type="evidence" value="ECO:0007669"/>
    <property type="project" value="InterPro"/>
</dbReference>
<dbReference type="GO" id="GO:0002181">
    <property type="term" value="P:cytoplasmic translation"/>
    <property type="evidence" value="ECO:0007669"/>
    <property type="project" value="TreeGrafter"/>
</dbReference>
<dbReference type="FunFam" id="3.90.930.12:FF:000001">
    <property type="entry name" value="50S ribosomal protein L6"/>
    <property type="match status" value="1"/>
</dbReference>
<dbReference type="FunFam" id="3.90.930.12:FF:000002">
    <property type="entry name" value="50S ribosomal protein L6"/>
    <property type="match status" value="1"/>
</dbReference>
<dbReference type="Gene3D" id="3.90.930.12">
    <property type="entry name" value="Ribosomal protein L6, alpha-beta domain"/>
    <property type="match status" value="2"/>
</dbReference>
<dbReference type="HAMAP" id="MF_01365_B">
    <property type="entry name" value="Ribosomal_uL6_B"/>
    <property type="match status" value="1"/>
</dbReference>
<dbReference type="InterPro" id="IPR000702">
    <property type="entry name" value="Ribosomal_uL6-like"/>
</dbReference>
<dbReference type="InterPro" id="IPR036789">
    <property type="entry name" value="Ribosomal_uL6-like_a/b-dom_sf"/>
</dbReference>
<dbReference type="InterPro" id="IPR020040">
    <property type="entry name" value="Ribosomal_uL6_a/b-dom"/>
</dbReference>
<dbReference type="InterPro" id="IPR019906">
    <property type="entry name" value="Ribosomal_uL6_bac-type"/>
</dbReference>
<dbReference type="InterPro" id="IPR002358">
    <property type="entry name" value="Ribosomal_uL6_CS"/>
</dbReference>
<dbReference type="NCBIfam" id="TIGR03654">
    <property type="entry name" value="L6_bact"/>
    <property type="match status" value="1"/>
</dbReference>
<dbReference type="PANTHER" id="PTHR11655">
    <property type="entry name" value="60S/50S RIBOSOMAL PROTEIN L6/L9"/>
    <property type="match status" value="1"/>
</dbReference>
<dbReference type="PANTHER" id="PTHR11655:SF14">
    <property type="entry name" value="LARGE RIBOSOMAL SUBUNIT PROTEIN UL6M"/>
    <property type="match status" value="1"/>
</dbReference>
<dbReference type="Pfam" id="PF00347">
    <property type="entry name" value="Ribosomal_L6"/>
    <property type="match status" value="2"/>
</dbReference>
<dbReference type="PIRSF" id="PIRSF002162">
    <property type="entry name" value="Ribosomal_L6"/>
    <property type="match status" value="1"/>
</dbReference>
<dbReference type="PRINTS" id="PR00059">
    <property type="entry name" value="RIBOSOMALL6"/>
</dbReference>
<dbReference type="SUPFAM" id="SSF56053">
    <property type="entry name" value="Ribosomal protein L6"/>
    <property type="match status" value="2"/>
</dbReference>
<dbReference type="PROSITE" id="PS00525">
    <property type="entry name" value="RIBOSOMAL_L6_1"/>
    <property type="match status" value="1"/>
</dbReference>
<organism>
    <name type="scientific">Mycobacterium sp. (strain MCS)</name>
    <dbReference type="NCBI Taxonomy" id="164756"/>
    <lineage>
        <taxon>Bacteria</taxon>
        <taxon>Bacillati</taxon>
        <taxon>Actinomycetota</taxon>
        <taxon>Actinomycetes</taxon>
        <taxon>Mycobacteriales</taxon>
        <taxon>Mycobacteriaceae</taxon>
        <taxon>Mycobacterium</taxon>
    </lineage>
</organism>
<feature type="chain" id="PRO_0000260897" description="Large ribosomal subunit protein uL6">
    <location>
        <begin position="1"/>
        <end position="179"/>
    </location>
</feature>
<accession>Q1BD90</accession>
<evidence type="ECO:0000255" key="1">
    <source>
        <dbReference type="HAMAP-Rule" id="MF_01365"/>
    </source>
</evidence>
<evidence type="ECO:0000305" key="2"/>
<name>RL6_MYCSS</name>
<comment type="function">
    <text evidence="1">This protein binds to the 23S rRNA, and is important in its secondary structure. It is located near the subunit interface in the base of the L7/L12 stalk, and near the tRNA binding site of the peptidyltransferase center.</text>
</comment>
<comment type="subunit">
    <text evidence="1">Part of the 50S ribosomal subunit.</text>
</comment>
<comment type="similarity">
    <text evidence="1">Belongs to the universal ribosomal protein uL6 family.</text>
</comment>
<proteinExistence type="inferred from homology"/>
<reference key="1">
    <citation type="submission" date="2006-06" db="EMBL/GenBank/DDBJ databases">
        <title>Complete sequence of chromosome of Mycobacterium sp. MCS.</title>
        <authorList>
            <consortium name="US DOE Joint Genome Institute"/>
            <person name="Copeland A."/>
            <person name="Lucas S."/>
            <person name="Lapidus A."/>
            <person name="Barry K."/>
            <person name="Detter J.C."/>
            <person name="Glavina del Rio T."/>
            <person name="Hammon N."/>
            <person name="Israni S."/>
            <person name="Dalin E."/>
            <person name="Tice H."/>
            <person name="Pitluck S."/>
            <person name="Martinez M."/>
            <person name="Schmutz J."/>
            <person name="Larimer F."/>
            <person name="Land M."/>
            <person name="Hauser L."/>
            <person name="Kyrpides N."/>
            <person name="Kim E."/>
            <person name="Miller C.D."/>
            <person name="Hughes J.E."/>
            <person name="Anderson A.J."/>
            <person name="Sims R.C."/>
            <person name="Richardson P."/>
        </authorList>
    </citation>
    <scope>NUCLEOTIDE SEQUENCE [LARGE SCALE GENOMIC DNA]</scope>
    <source>
        <strain>MCS</strain>
    </source>
</reference>
<sequence length="179" mass="19390">MSRIGKQPVPVPAGVDVTIEGQNVSVKGPKGTLSLAVAEPIVVARDDEGAIVVTRPNDERRNRSLHGLSRTLVANLVEGVTQGYTTKMEIYGVGYRVALKGSNLEFALGYSHPVVIEPPEGITFAVETPTKFSVSGIDKQKVGQISAIIRRLRRPDPYKGKGVRYEGEQIRRKVGKTGK</sequence>
<gene>
    <name evidence="1" type="primary">rplF</name>
    <name type="ordered locus">Mmcs_1030</name>
</gene>
<keyword id="KW-0687">Ribonucleoprotein</keyword>
<keyword id="KW-0689">Ribosomal protein</keyword>
<keyword id="KW-0694">RNA-binding</keyword>
<keyword id="KW-0699">rRNA-binding</keyword>
<protein>
    <recommendedName>
        <fullName evidence="1">Large ribosomal subunit protein uL6</fullName>
    </recommendedName>
    <alternativeName>
        <fullName evidence="2">50S ribosomal protein L6</fullName>
    </alternativeName>
</protein>